<proteinExistence type="inferred from homology"/>
<feature type="chain" id="PRO_0000375719" description="Succinyl-diaminopimelate desuccinylase">
    <location>
        <begin position="1"/>
        <end position="375"/>
    </location>
</feature>
<feature type="active site" evidence="1">
    <location>
        <position position="68"/>
    </location>
</feature>
<feature type="active site" description="Proton acceptor" evidence="1">
    <location>
        <position position="133"/>
    </location>
</feature>
<feature type="binding site" evidence="1">
    <location>
        <position position="66"/>
    </location>
    <ligand>
        <name>Zn(2+)</name>
        <dbReference type="ChEBI" id="CHEBI:29105"/>
        <label>1</label>
    </ligand>
</feature>
<feature type="binding site" evidence="1">
    <location>
        <position position="99"/>
    </location>
    <ligand>
        <name>Zn(2+)</name>
        <dbReference type="ChEBI" id="CHEBI:29105"/>
        <label>1</label>
    </ligand>
</feature>
<feature type="binding site" evidence="1">
    <location>
        <position position="99"/>
    </location>
    <ligand>
        <name>Zn(2+)</name>
        <dbReference type="ChEBI" id="CHEBI:29105"/>
        <label>2</label>
    </ligand>
</feature>
<feature type="binding site" evidence="1">
    <location>
        <position position="134"/>
    </location>
    <ligand>
        <name>Zn(2+)</name>
        <dbReference type="ChEBI" id="CHEBI:29105"/>
        <label>2</label>
    </ligand>
</feature>
<feature type="binding site" evidence="1">
    <location>
        <position position="162"/>
    </location>
    <ligand>
        <name>Zn(2+)</name>
        <dbReference type="ChEBI" id="CHEBI:29105"/>
        <label>1</label>
    </ligand>
</feature>
<feature type="binding site" evidence="1">
    <location>
        <position position="348"/>
    </location>
    <ligand>
        <name>Zn(2+)</name>
        <dbReference type="ChEBI" id="CHEBI:29105"/>
        <label>2</label>
    </ligand>
</feature>
<comment type="function">
    <text evidence="1">Catalyzes the hydrolysis of N-succinyl-L,L-diaminopimelic acid (SDAP), forming succinate and LL-2,6-diaminopimelate (DAP), an intermediate involved in the bacterial biosynthesis of lysine and meso-diaminopimelic acid, an essential component of bacterial cell walls.</text>
</comment>
<comment type="catalytic activity">
    <reaction evidence="1">
        <text>N-succinyl-(2S,6S)-2,6-diaminopimelate + H2O = (2S,6S)-2,6-diaminopimelate + succinate</text>
        <dbReference type="Rhea" id="RHEA:22608"/>
        <dbReference type="ChEBI" id="CHEBI:15377"/>
        <dbReference type="ChEBI" id="CHEBI:30031"/>
        <dbReference type="ChEBI" id="CHEBI:57609"/>
        <dbReference type="ChEBI" id="CHEBI:58087"/>
        <dbReference type="EC" id="3.5.1.18"/>
    </reaction>
</comment>
<comment type="cofactor">
    <cofactor evidence="1">
        <name>Zn(2+)</name>
        <dbReference type="ChEBI" id="CHEBI:29105"/>
    </cofactor>
    <cofactor evidence="1">
        <name>Co(2+)</name>
        <dbReference type="ChEBI" id="CHEBI:48828"/>
    </cofactor>
    <text evidence="1">Binds 2 Zn(2+) or Co(2+) ions per subunit.</text>
</comment>
<comment type="pathway">
    <text evidence="1">Amino-acid biosynthesis; L-lysine biosynthesis via DAP pathway; LL-2,6-diaminopimelate from (S)-tetrahydrodipicolinate (succinylase route): step 3/3.</text>
</comment>
<comment type="subunit">
    <text evidence="1">Homodimer.</text>
</comment>
<comment type="similarity">
    <text evidence="1">Belongs to the peptidase M20A family. DapE subfamily.</text>
</comment>
<evidence type="ECO:0000255" key="1">
    <source>
        <dbReference type="HAMAP-Rule" id="MF_01690"/>
    </source>
</evidence>
<reference key="1">
    <citation type="journal article" date="2009" name="BMC Genomics">
        <title>Pseudogene accumulation in the evolutionary histories of Salmonella enterica serovars Paratyphi A and Typhi.</title>
        <authorList>
            <person name="Holt K.E."/>
            <person name="Thomson N.R."/>
            <person name="Wain J."/>
            <person name="Langridge G.C."/>
            <person name="Hasan R."/>
            <person name="Bhutta Z.A."/>
            <person name="Quail M.A."/>
            <person name="Norbertczak H."/>
            <person name="Walker D."/>
            <person name="Simmonds M."/>
            <person name="White B."/>
            <person name="Bason N."/>
            <person name="Mungall K."/>
            <person name="Dougan G."/>
            <person name="Parkhill J."/>
        </authorList>
    </citation>
    <scope>NUCLEOTIDE SEQUENCE [LARGE SCALE GENOMIC DNA]</scope>
    <source>
        <strain>AKU_12601</strain>
    </source>
</reference>
<protein>
    <recommendedName>
        <fullName evidence="1">Succinyl-diaminopimelate desuccinylase</fullName>
        <shortName evidence="1">SDAP desuccinylase</shortName>
        <ecNumber evidence="1">3.5.1.18</ecNumber>
    </recommendedName>
    <alternativeName>
        <fullName evidence="1">N-succinyl-LL-2,6-diaminoheptanedioate amidohydrolase</fullName>
    </alternativeName>
</protein>
<dbReference type="EC" id="3.5.1.18" evidence="1"/>
<dbReference type="EMBL" id="FM200053">
    <property type="protein sequence ID" value="CAR58484.1"/>
    <property type="molecule type" value="Genomic_DNA"/>
</dbReference>
<dbReference type="RefSeq" id="WP_001277823.1">
    <property type="nucleotide sequence ID" value="NC_011147.1"/>
</dbReference>
<dbReference type="SMR" id="B5BB22"/>
<dbReference type="KEGG" id="sek:SSPA0361"/>
<dbReference type="HOGENOM" id="CLU_021802_4_0_6"/>
<dbReference type="UniPathway" id="UPA00034">
    <property type="reaction ID" value="UER00021"/>
</dbReference>
<dbReference type="Proteomes" id="UP000001869">
    <property type="component" value="Chromosome"/>
</dbReference>
<dbReference type="GO" id="GO:0008777">
    <property type="term" value="F:acetylornithine deacetylase activity"/>
    <property type="evidence" value="ECO:0007669"/>
    <property type="project" value="TreeGrafter"/>
</dbReference>
<dbReference type="GO" id="GO:0050897">
    <property type="term" value="F:cobalt ion binding"/>
    <property type="evidence" value="ECO:0007669"/>
    <property type="project" value="UniProtKB-UniRule"/>
</dbReference>
<dbReference type="GO" id="GO:0009014">
    <property type="term" value="F:succinyl-diaminopimelate desuccinylase activity"/>
    <property type="evidence" value="ECO:0007669"/>
    <property type="project" value="UniProtKB-UniRule"/>
</dbReference>
<dbReference type="GO" id="GO:0008270">
    <property type="term" value="F:zinc ion binding"/>
    <property type="evidence" value="ECO:0007669"/>
    <property type="project" value="UniProtKB-UniRule"/>
</dbReference>
<dbReference type="GO" id="GO:0019877">
    <property type="term" value="P:diaminopimelate biosynthetic process"/>
    <property type="evidence" value="ECO:0007669"/>
    <property type="project" value="UniProtKB-UniRule"/>
</dbReference>
<dbReference type="GO" id="GO:0006526">
    <property type="term" value="P:L-arginine biosynthetic process"/>
    <property type="evidence" value="ECO:0007669"/>
    <property type="project" value="TreeGrafter"/>
</dbReference>
<dbReference type="GO" id="GO:0009089">
    <property type="term" value="P:lysine biosynthetic process via diaminopimelate"/>
    <property type="evidence" value="ECO:0007669"/>
    <property type="project" value="UniProtKB-UniRule"/>
</dbReference>
<dbReference type="CDD" id="cd03891">
    <property type="entry name" value="M20_DapE_proteobac"/>
    <property type="match status" value="1"/>
</dbReference>
<dbReference type="FunFam" id="3.30.70.360:FF:000011">
    <property type="entry name" value="Succinyl-diaminopimelate desuccinylase"/>
    <property type="match status" value="1"/>
</dbReference>
<dbReference type="FunFam" id="3.40.630.10:FF:000005">
    <property type="entry name" value="Succinyl-diaminopimelate desuccinylase"/>
    <property type="match status" value="1"/>
</dbReference>
<dbReference type="FunFam" id="3.40.630.10:FF:000010">
    <property type="entry name" value="Succinyl-diaminopimelate desuccinylase"/>
    <property type="match status" value="1"/>
</dbReference>
<dbReference type="Gene3D" id="3.40.630.10">
    <property type="entry name" value="Zn peptidases"/>
    <property type="match status" value="2"/>
</dbReference>
<dbReference type="HAMAP" id="MF_01690">
    <property type="entry name" value="DapE"/>
    <property type="match status" value="1"/>
</dbReference>
<dbReference type="InterPro" id="IPR001261">
    <property type="entry name" value="ArgE/DapE_CS"/>
</dbReference>
<dbReference type="InterPro" id="IPR036264">
    <property type="entry name" value="Bact_exopeptidase_dim_dom"/>
</dbReference>
<dbReference type="InterPro" id="IPR005941">
    <property type="entry name" value="DapE_proteobac"/>
</dbReference>
<dbReference type="InterPro" id="IPR002933">
    <property type="entry name" value="Peptidase_M20"/>
</dbReference>
<dbReference type="InterPro" id="IPR011650">
    <property type="entry name" value="Peptidase_M20_dimer"/>
</dbReference>
<dbReference type="InterPro" id="IPR050072">
    <property type="entry name" value="Peptidase_M20A"/>
</dbReference>
<dbReference type="NCBIfam" id="TIGR01246">
    <property type="entry name" value="dapE_proteo"/>
    <property type="match status" value="1"/>
</dbReference>
<dbReference type="NCBIfam" id="NF009557">
    <property type="entry name" value="PRK13009.1"/>
    <property type="match status" value="1"/>
</dbReference>
<dbReference type="PANTHER" id="PTHR43808">
    <property type="entry name" value="ACETYLORNITHINE DEACETYLASE"/>
    <property type="match status" value="1"/>
</dbReference>
<dbReference type="PANTHER" id="PTHR43808:SF31">
    <property type="entry name" value="N-ACETYL-L-CITRULLINE DEACETYLASE"/>
    <property type="match status" value="1"/>
</dbReference>
<dbReference type="Pfam" id="PF07687">
    <property type="entry name" value="M20_dimer"/>
    <property type="match status" value="1"/>
</dbReference>
<dbReference type="Pfam" id="PF01546">
    <property type="entry name" value="Peptidase_M20"/>
    <property type="match status" value="1"/>
</dbReference>
<dbReference type="SUPFAM" id="SSF55031">
    <property type="entry name" value="Bacterial exopeptidase dimerisation domain"/>
    <property type="match status" value="1"/>
</dbReference>
<dbReference type="SUPFAM" id="SSF53187">
    <property type="entry name" value="Zn-dependent exopeptidases"/>
    <property type="match status" value="1"/>
</dbReference>
<dbReference type="PROSITE" id="PS00758">
    <property type="entry name" value="ARGE_DAPE_CPG2_1"/>
    <property type="match status" value="1"/>
</dbReference>
<dbReference type="PROSITE" id="PS00759">
    <property type="entry name" value="ARGE_DAPE_CPG2_2"/>
    <property type="match status" value="1"/>
</dbReference>
<keyword id="KW-0028">Amino-acid biosynthesis</keyword>
<keyword id="KW-0170">Cobalt</keyword>
<keyword id="KW-0220">Diaminopimelate biosynthesis</keyword>
<keyword id="KW-0378">Hydrolase</keyword>
<keyword id="KW-0457">Lysine biosynthesis</keyword>
<keyword id="KW-0479">Metal-binding</keyword>
<keyword id="KW-0862">Zinc</keyword>
<gene>
    <name evidence="1" type="primary">dapE</name>
    <name type="ordered locus">SSPA0361</name>
</gene>
<name>DAPE_SALPK</name>
<sequence length="375" mass="41560">MSCPVIELTQQLIRRPSLSPDDAGCQALMIERLRKIGFTIEHMDFGDTQNFWAWRGRGETLAFAGHTDVVPAGDVDRWINPPFEPTIRDGMLFGRGAADMKGSLAAMVVAAERFVAQHPHHRGRLAFLITSDEEASAKNGTVKVVEALMARNERLDYCLVGEPSSTEIVGDVVKNGRRGSLTCNLTIHGVQGHVAYPHLADNPVHRAAPFLNELVAIEWDRGNDFFPATSMQVANIQAGTGSNNVIPGELFVQFNFRFSTELTDEIIKERVHALLEKHQLRYTVDWWLSGQPFLTARGKLVDAVVNAIEHYNEIKPQLLTTGGTSDGRFIARMGAQVVELGPVNATIHKINECVNAADLQLLARMYQRIMEQLVA</sequence>
<accession>B5BB22</accession>
<organism>
    <name type="scientific">Salmonella paratyphi A (strain AKU_12601)</name>
    <dbReference type="NCBI Taxonomy" id="554290"/>
    <lineage>
        <taxon>Bacteria</taxon>
        <taxon>Pseudomonadati</taxon>
        <taxon>Pseudomonadota</taxon>
        <taxon>Gammaproteobacteria</taxon>
        <taxon>Enterobacterales</taxon>
        <taxon>Enterobacteriaceae</taxon>
        <taxon>Salmonella</taxon>
    </lineage>
</organism>